<protein>
    <recommendedName>
        <fullName evidence="1">GTPase Era</fullName>
    </recommendedName>
</protein>
<gene>
    <name evidence="1" type="primary">era</name>
    <name type="ordered locus">Amet_3026</name>
</gene>
<comment type="function">
    <text evidence="1">An essential GTPase that binds both GDP and GTP, with rapid nucleotide exchange. Plays a role in 16S rRNA processing and 30S ribosomal subunit biogenesis and possibly also in cell cycle regulation and energy metabolism.</text>
</comment>
<comment type="subunit">
    <text evidence="1">Monomer.</text>
</comment>
<comment type="subcellular location">
    <subcellularLocation>
        <location>Cytoplasm</location>
    </subcellularLocation>
    <subcellularLocation>
        <location evidence="1">Cell membrane</location>
        <topology evidence="1">Peripheral membrane protein</topology>
    </subcellularLocation>
</comment>
<comment type="similarity">
    <text evidence="1 2">Belongs to the TRAFAC class TrmE-Era-EngA-EngB-Septin-like GTPase superfamily. Era GTPase family.</text>
</comment>
<accession>A6TSJ8</accession>
<sequence>MSYKSGFVTIIGRPNVGKSTLMNQIIGEKIAIMSDKPQTTRNKIQSVYSQEDFQIVFLDTPGIHKPKHKLGEYMVKVARDTLKEVDVVLFLVDEGQKIGPGDRFIMEQLKDIKTPMFLIINKIDKMNQEILNEVCGLFEETGLFQRIIPISALEGANIDTLIKQIVSFLPEGPQYFPSDMITDQPERLLVAEIVREKLLHYLDQEIPHGIAVETSMMKQRPNQDIVDIQATIYCEKKSHKGIIIGKGGRKLKGVGKSARQDIEKLLGSKVFLELWVKVNEDWRNQSRILKSLGYE</sequence>
<proteinExistence type="inferred from homology"/>
<reference key="1">
    <citation type="journal article" date="2016" name="Genome Announc.">
        <title>Complete genome sequence of Alkaliphilus metalliredigens strain QYMF, an alkaliphilic and metal-reducing bacterium isolated from borax-contaminated leachate ponds.</title>
        <authorList>
            <person name="Hwang C."/>
            <person name="Copeland A."/>
            <person name="Lucas S."/>
            <person name="Lapidus A."/>
            <person name="Barry K."/>
            <person name="Detter J.C."/>
            <person name="Glavina Del Rio T."/>
            <person name="Hammon N."/>
            <person name="Israni S."/>
            <person name="Dalin E."/>
            <person name="Tice H."/>
            <person name="Pitluck S."/>
            <person name="Chertkov O."/>
            <person name="Brettin T."/>
            <person name="Bruce D."/>
            <person name="Han C."/>
            <person name="Schmutz J."/>
            <person name="Larimer F."/>
            <person name="Land M.L."/>
            <person name="Hauser L."/>
            <person name="Kyrpides N."/>
            <person name="Mikhailova N."/>
            <person name="Ye Q."/>
            <person name="Zhou J."/>
            <person name="Richardson P."/>
            <person name="Fields M.W."/>
        </authorList>
    </citation>
    <scope>NUCLEOTIDE SEQUENCE [LARGE SCALE GENOMIC DNA]</scope>
    <source>
        <strain>QYMF</strain>
    </source>
</reference>
<evidence type="ECO:0000255" key="1">
    <source>
        <dbReference type="HAMAP-Rule" id="MF_00367"/>
    </source>
</evidence>
<evidence type="ECO:0000255" key="2">
    <source>
        <dbReference type="PROSITE-ProRule" id="PRU01050"/>
    </source>
</evidence>
<feature type="chain" id="PRO_1000079655" description="GTPase Era">
    <location>
        <begin position="1"/>
        <end position="295"/>
    </location>
</feature>
<feature type="domain" description="Era-type G" evidence="2">
    <location>
        <begin position="4"/>
        <end position="171"/>
    </location>
</feature>
<feature type="domain" description="KH type-2" evidence="1">
    <location>
        <begin position="202"/>
        <end position="280"/>
    </location>
</feature>
<feature type="region of interest" description="G1" evidence="2">
    <location>
        <begin position="12"/>
        <end position="19"/>
    </location>
</feature>
<feature type="region of interest" description="G2" evidence="2">
    <location>
        <begin position="38"/>
        <end position="42"/>
    </location>
</feature>
<feature type="region of interest" description="G3" evidence="2">
    <location>
        <begin position="59"/>
        <end position="62"/>
    </location>
</feature>
<feature type="region of interest" description="G4" evidence="2">
    <location>
        <begin position="121"/>
        <end position="124"/>
    </location>
</feature>
<feature type="region of interest" description="G5" evidence="2">
    <location>
        <begin position="150"/>
        <end position="152"/>
    </location>
</feature>
<feature type="binding site" evidence="1">
    <location>
        <begin position="12"/>
        <end position="19"/>
    </location>
    <ligand>
        <name>GTP</name>
        <dbReference type="ChEBI" id="CHEBI:37565"/>
    </ligand>
</feature>
<feature type="binding site" evidence="1">
    <location>
        <begin position="59"/>
        <end position="63"/>
    </location>
    <ligand>
        <name>GTP</name>
        <dbReference type="ChEBI" id="CHEBI:37565"/>
    </ligand>
</feature>
<feature type="binding site" evidence="1">
    <location>
        <begin position="121"/>
        <end position="124"/>
    </location>
    <ligand>
        <name>GTP</name>
        <dbReference type="ChEBI" id="CHEBI:37565"/>
    </ligand>
</feature>
<keyword id="KW-1003">Cell membrane</keyword>
<keyword id="KW-0963">Cytoplasm</keyword>
<keyword id="KW-0342">GTP-binding</keyword>
<keyword id="KW-0472">Membrane</keyword>
<keyword id="KW-0547">Nucleotide-binding</keyword>
<keyword id="KW-1185">Reference proteome</keyword>
<keyword id="KW-0690">Ribosome biogenesis</keyword>
<keyword id="KW-0694">RNA-binding</keyword>
<keyword id="KW-0699">rRNA-binding</keyword>
<name>ERA_ALKMQ</name>
<dbReference type="EMBL" id="CP000724">
    <property type="protein sequence ID" value="ABR49166.1"/>
    <property type="molecule type" value="Genomic_DNA"/>
</dbReference>
<dbReference type="RefSeq" id="WP_012064133.1">
    <property type="nucleotide sequence ID" value="NC_009633.1"/>
</dbReference>
<dbReference type="SMR" id="A6TSJ8"/>
<dbReference type="STRING" id="293826.Amet_3026"/>
<dbReference type="KEGG" id="amt:Amet_3026"/>
<dbReference type="eggNOG" id="COG1159">
    <property type="taxonomic scope" value="Bacteria"/>
</dbReference>
<dbReference type="HOGENOM" id="CLU_038009_1_0_9"/>
<dbReference type="OrthoDB" id="9805918at2"/>
<dbReference type="Proteomes" id="UP000001572">
    <property type="component" value="Chromosome"/>
</dbReference>
<dbReference type="GO" id="GO:0005829">
    <property type="term" value="C:cytosol"/>
    <property type="evidence" value="ECO:0007669"/>
    <property type="project" value="TreeGrafter"/>
</dbReference>
<dbReference type="GO" id="GO:0005886">
    <property type="term" value="C:plasma membrane"/>
    <property type="evidence" value="ECO:0007669"/>
    <property type="project" value="UniProtKB-SubCell"/>
</dbReference>
<dbReference type="GO" id="GO:0005525">
    <property type="term" value="F:GTP binding"/>
    <property type="evidence" value="ECO:0007669"/>
    <property type="project" value="UniProtKB-UniRule"/>
</dbReference>
<dbReference type="GO" id="GO:0003924">
    <property type="term" value="F:GTPase activity"/>
    <property type="evidence" value="ECO:0007669"/>
    <property type="project" value="UniProtKB-UniRule"/>
</dbReference>
<dbReference type="GO" id="GO:0043024">
    <property type="term" value="F:ribosomal small subunit binding"/>
    <property type="evidence" value="ECO:0007669"/>
    <property type="project" value="TreeGrafter"/>
</dbReference>
<dbReference type="GO" id="GO:0070181">
    <property type="term" value="F:small ribosomal subunit rRNA binding"/>
    <property type="evidence" value="ECO:0007669"/>
    <property type="project" value="UniProtKB-UniRule"/>
</dbReference>
<dbReference type="GO" id="GO:0000028">
    <property type="term" value="P:ribosomal small subunit assembly"/>
    <property type="evidence" value="ECO:0007669"/>
    <property type="project" value="TreeGrafter"/>
</dbReference>
<dbReference type="CDD" id="cd04163">
    <property type="entry name" value="Era"/>
    <property type="match status" value="1"/>
</dbReference>
<dbReference type="CDD" id="cd22534">
    <property type="entry name" value="KH-II_Era"/>
    <property type="match status" value="1"/>
</dbReference>
<dbReference type="FunFam" id="3.30.300.20:FF:000003">
    <property type="entry name" value="GTPase Era"/>
    <property type="match status" value="1"/>
</dbReference>
<dbReference type="FunFam" id="3.40.50.300:FF:000094">
    <property type="entry name" value="GTPase Era"/>
    <property type="match status" value="1"/>
</dbReference>
<dbReference type="Gene3D" id="3.30.300.20">
    <property type="match status" value="1"/>
</dbReference>
<dbReference type="Gene3D" id="3.40.50.300">
    <property type="entry name" value="P-loop containing nucleotide triphosphate hydrolases"/>
    <property type="match status" value="1"/>
</dbReference>
<dbReference type="HAMAP" id="MF_00367">
    <property type="entry name" value="GTPase_Era"/>
    <property type="match status" value="1"/>
</dbReference>
<dbReference type="InterPro" id="IPR030388">
    <property type="entry name" value="G_ERA_dom"/>
</dbReference>
<dbReference type="InterPro" id="IPR006073">
    <property type="entry name" value="GTP-bd"/>
</dbReference>
<dbReference type="InterPro" id="IPR005662">
    <property type="entry name" value="GTPase_Era-like"/>
</dbReference>
<dbReference type="InterPro" id="IPR015946">
    <property type="entry name" value="KH_dom-like_a/b"/>
</dbReference>
<dbReference type="InterPro" id="IPR004044">
    <property type="entry name" value="KH_dom_type_2"/>
</dbReference>
<dbReference type="InterPro" id="IPR009019">
    <property type="entry name" value="KH_sf_prok-type"/>
</dbReference>
<dbReference type="InterPro" id="IPR027417">
    <property type="entry name" value="P-loop_NTPase"/>
</dbReference>
<dbReference type="InterPro" id="IPR005225">
    <property type="entry name" value="Small_GTP-bd"/>
</dbReference>
<dbReference type="NCBIfam" id="TIGR00436">
    <property type="entry name" value="era"/>
    <property type="match status" value="1"/>
</dbReference>
<dbReference type="NCBIfam" id="NF000908">
    <property type="entry name" value="PRK00089.1"/>
    <property type="match status" value="1"/>
</dbReference>
<dbReference type="NCBIfam" id="TIGR00231">
    <property type="entry name" value="small_GTP"/>
    <property type="match status" value="1"/>
</dbReference>
<dbReference type="PANTHER" id="PTHR42698">
    <property type="entry name" value="GTPASE ERA"/>
    <property type="match status" value="1"/>
</dbReference>
<dbReference type="PANTHER" id="PTHR42698:SF1">
    <property type="entry name" value="GTPASE ERA, MITOCHONDRIAL"/>
    <property type="match status" value="1"/>
</dbReference>
<dbReference type="Pfam" id="PF07650">
    <property type="entry name" value="KH_2"/>
    <property type="match status" value="1"/>
</dbReference>
<dbReference type="Pfam" id="PF01926">
    <property type="entry name" value="MMR_HSR1"/>
    <property type="match status" value="1"/>
</dbReference>
<dbReference type="SUPFAM" id="SSF52540">
    <property type="entry name" value="P-loop containing nucleoside triphosphate hydrolases"/>
    <property type="match status" value="1"/>
</dbReference>
<dbReference type="SUPFAM" id="SSF54814">
    <property type="entry name" value="Prokaryotic type KH domain (KH-domain type II)"/>
    <property type="match status" value="1"/>
</dbReference>
<dbReference type="PROSITE" id="PS51713">
    <property type="entry name" value="G_ERA"/>
    <property type="match status" value="1"/>
</dbReference>
<dbReference type="PROSITE" id="PS50823">
    <property type="entry name" value="KH_TYPE_2"/>
    <property type="match status" value="1"/>
</dbReference>
<organism>
    <name type="scientific">Alkaliphilus metalliredigens (strain QYMF)</name>
    <dbReference type="NCBI Taxonomy" id="293826"/>
    <lineage>
        <taxon>Bacteria</taxon>
        <taxon>Bacillati</taxon>
        <taxon>Bacillota</taxon>
        <taxon>Clostridia</taxon>
        <taxon>Peptostreptococcales</taxon>
        <taxon>Natronincolaceae</taxon>
        <taxon>Alkaliphilus</taxon>
    </lineage>
</organism>